<protein>
    <recommendedName>
        <fullName evidence="2">Small ribosomal subunit protein uS19</fullName>
    </recommendedName>
    <alternativeName>
        <fullName>30S ribosomal protein S19</fullName>
    </alternativeName>
</protein>
<evidence type="ECO:0000250" key="1"/>
<evidence type="ECO:0000305" key="2"/>
<name>RS19_ASHYP</name>
<organism>
    <name type="scientific">Ash yellows phytoplasma</name>
    <dbReference type="NCBI Taxonomy" id="35780"/>
    <lineage>
        <taxon>Bacteria</taxon>
        <taxon>Bacillati</taxon>
        <taxon>Mycoplasmatota</taxon>
        <taxon>Mollicutes</taxon>
        <taxon>Acholeplasmatales</taxon>
        <taxon>Acholeplasmataceae</taxon>
        <taxon>Candidatus Phytoplasma</taxon>
        <taxon>16SrVII (Ash yellows group)</taxon>
    </lineage>
</organism>
<proteinExistence type="inferred from homology"/>
<dbReference type="EMBL" id="L26999">
    <property type="protein sequence ID" value="AAA83936.1"/>
    <property type="molecule type" value="Genomic_DNA"/>
</dbReference>
<dbReference type="GO" id="GO:1990904">
    <property type="term" value="C:ribonucleoprotein complex"/>
    <property type="evidence" value="ECO:0007669"/>
    <property type="project" value="UniProtKB-KW"/>
</dbReference>
<dbReference type="GO" id="GO:0005840">
    <property type="term" value="C:ribosome"/>
    <property type="evidence" value="ECO:0007669"/>
    <property type="project" value="UniProtKB-KW"/>
</dbReference>
<dbReference type="GO" id="GO:0019843">
    <property type="term" value="F:rRNA binding"/>
    <property type="evidence" value="ECO:0007669"/>
    <property type="project" value="UniProtKB-KW"/>
</dbReference>
<reference key="1">
    <citation type="journal article" date="1994" name="J. Bacteriol.">
        <title>Phylogeny of mycoplasmalike organisms (phytoplasmas): a basis for their classification.</title>
        <authorList>
            <person name="Gundersen D.E."/>
            <person name="Lee I.M."/>
            <person name="Rehner S.A."/>
            <person name="Davis R.E."/>
            <person name="Kingsbury D.T."/>
        </authorList>
    </citation>
    <scope>NUCLEOTIDE SEQUENCE [GENOMIC DNA]</scope>
</reference>
<accession>Q44592</accession>
<sequence>AVILKAIKXNPKK</sequence>
<keyword id="KW-0687">Ribonucleoprotein</keyword>
<keyword id="KW-0689">Ribosomal protein</keyword>
<keyword id="KW-0694">RNA-binding</keyword>
<keyword id="KW-0699">rRNA-binding</keyword>
<comment type="function">
    <text evidence="1">Protein S19 forms a complex with S13 that binds strongly to the 16S ribosomal RNA.</text>
</comment>
<comment type="similarity">
    <text evidence="2">Belongs to the universal ribosomal protein uS19 family.</text>
</comment>
<feature type="chain" id="PRO_0000129769" description="Small ribosomal subunit protein uS19">
    <location>
        <begin position="1" status="less than"/>
        <end position="13"/>
    </location>
</feature>
<feature type="non-terminal residue">
    <location>
        <position position="1"/>
    </location>
</feature>
<gene>
    <name type="primary">rpsS</name>
    <name type="synonym">rps19</name>
</gene>